<reference key="1">
    <citation type="journal article" date="2008" name="DNA Res.">
        <title>Comparative genome analysis of Lactobacillus reuteri and Lactobacillus fermentum reveal a genomic island for reuterin and cobalamin production.</title>
        <authorList>
            <person name="Morita H."/>
            <person name="Toh H."/>
            <person name="Fukuda S."/>
            <person name="Horikawa H."/>
            <person name="Oshima K."/>
            <person name="Suzuki T."/>
            <person name="Murakami M."/>
            <person name="Hisamatsu S."/>
            <person name="Kato Y."/>
            <person name="Takizawa T."/>
            <person name="Fukuoka H."/>
            <person name="Yoshimura T."/>
            <person name="Itoh K."/>
            <person name="O'Sullivan D.J."/>
            <person name="McKay L.L."/>
            <person name="Ohno H."/>
            <person name="Kikuchi J."/>
            <person name="Masaoka T."/>
            <person name="Hattori M."/>
        </authorList>
    </citation>
    <scope>NUCLEOTIDE SEQUENCE [LARGE SCALE GENOMIC DNA]</scope>
    <source>
        <strain>NBRC 3956 / LMG 18251</strain>
    </source>
</reference>
<evidence type="ECO:0000255" key="1">
    <source>
        <dbReference type="HAMAP-Rule" id="MF_00385"/>
    </source>
</evidence>
<evidence type="ECO:0000305" key="2"/>
<proteinExistence type="inferred from homology"/>
<comment type="similarity">
    <text evidence="1">Belongs to the bacterial ribosomal protein bS16 family.</text>
</comment>
<organism>
    <name type="scientific">Limosilactobacillus fermentum (strain NBRC 3956 / LMG 18251)</name>
    <name type="common">Lactobacillus fermentum</name>
    <dbReference type="NCBI Taxonomy" id="334390"/>
    <lineage>
        <taxon>Bacteria</taxon>
        <taxon>Bacillati</taxon>
        <taxon>Bacillota</taxon>
        <taxon>Bacilli</taxon>
        <taxon>Lactobacillales</taxon>
        <taxon>Lactobacillaceae</taxon>
        <taxon>Limosilactobacillus</taxon>
    </lineage>
</organism>
<keyword id="KW-1185">Reference proteome</keyword>
<keyword id="KW-0687">Ribonucleoprotein</keyword>
<keyword id="KW-0689">Ribosomal protein</keyword>
<sequence>MSVKIRLKRMGSKKRPFYRIVVADSRSPRDGRFITSLGTYNPLTTPKQVKFDEDAVMEWLQKGAQPSDTVRNMLQKAGVMKKYHEAKYAKK</sequence>
<feature type="chain" id="PRO_1000196423" description="Small ribosomal subunit protein bS16">
    <location>
        <begin position="1"/>
        <end position="91"/>
    </location>
</feature>
<gene>
    <name evidence="1" type="primary">rpsP</name>
    <name type="ordered locus">LAF_1224</name>
</gene>
<protein>
    <recommendedName>
        <fullName evidence="1">Small ribosomal subunit protein bS16</fullName>
    </recommendedName>
    <alternativeName>
        <fullName evidence="2">30S ribosomal protein S16</fullName>
    </alternativeName>
</protein>
<name>RS16_LIMF3</name>
<accession>B2GD28</accession>
<dbReference type="EMBL" id="AP008937">
    <property type="protein sequence ID" value="BAG27560.1"/>
    <property type="molecule type" value="Genomic_DNA"/>
</dbReference>
<dbReference type="RefSeq" id="WP_003683887.1">
    <property type="nucleotide sequence ID" value="NC_010610.1"/>
</dbReference>
<dbReference type="SMR" id="B2GD28"/>
<dbReference type="GeneID" id="83714328"/>
<dbReference type="KEGG" id="lfe:LAF_1224"/>
<dbReference type="eggNOG" id="COG0228">
    <property type="taxonomic scope" value="Bacteria"/>
</dbReference>
<dbReference type="HOGENOM" id="CLU_100590_5_0_9"/>
<dbReference type="Proteomes" id="UP000001697">
    <property type="component" value="Chromosome"/>
</dbReference>
<dbReference type="GO" id="GO:0005737">
    <property type="term" value="C:cytoplasm"/>
    <property type="evidence" value="ECO:0007669"/>
    <property type="project" value="UniProtKB-ARBA"/>
</dbReference>
<dbReference type="GO" id="GO:0015935">
    <property type="term" value="C:small ribosomal subunit"/>
    <property type="evidence" value="ECO:0007669"/>
    <property type="project" value="TreeGrafter"/>
</dbReference>
<dbReference type="GO" id="GO:0003735">
    <property type="term" value="F:structural constituent of ribosome"/>
    <property type="evidence" value="ECO:0007669"/>
    <property type="project" value="InterPro"/>
</dbReference>
<dbReference type="GO" id="GO:0006412">
    <property type="term" value="P:translation"/>
    <property type="evidence" value="ECO:0007669"/>
    <property type="project" value="UniProtKB-UniRule"/>
</dbReference>
<dbReference type="FunFam" id="3.30.1320.10:FF:000002">
    <property type="entry name" value="30S ribosomal protein S16"/>
    <property type="match status" value="1"/>
</dbReference>
<dbReference type="Gene3D" id="3.30.1320.10">
    <property type="match status" value="1"/>
</dbReference>
<dbReference type="HAMAP" id="MF_00385">
    <property type="entry name" value="Ribosomal_bS16"/>
    <property type="match status" value="1"/>
</dbReference>
<dbReference type="InterPro" id="IPR000307">
    <property type="entry name" value="Ribosomal_bS16"/>
</dbReference>
<dbReference type="InterPro" id="IPR023803">
    <property type="entry name" value="Ribosomal_bS16_dom_sf"/>
</dbReference>
<dbReference type="NCBIfam" id="TIGR00002">
    <property type="entry name" value="S16"/>
    <property type="match status" value="1"/>
</dbReference>
<dbReference type="PANTHER" id="PTHR12919">
    <property type="entry name" value="30S RIBOSOMAL PROTEIN S16"/>
    <property type="match status" value="1"/>
</dbReference>
<dbReference type="PANTHER" id="PTHR12919:SF20">
    <property type="entry name" value="SMALL RIBOSOMAL SUBUNIT PROTEIN BS16M"/>
    <property type="match status" value="1"/>
</dbReference>
<dbReference type="Pfam" id="PF00886">
    <property type="entry name" value="Ribosomal_S16"/>
    <property type="match status" value="1"/>
</dbReference>
<dbReference type="SUPFAM" id="SSF54565">
    <property type="entry name" value="Ribosomal protein S16"/>
    <property type="match status" value="1"/>
</dbReference>